<feature type="chain" id="PRO_0000077108" description="Large ribosomal subunit protein uL3">
    <location>
        <begin position="1"/>
        <end position="191"/>
    </location>
</feature>
<feature type="region of interest" description="Disordered" evidence="2">
    <location>
        <begin position="119"/>
        <end position="138"/>
    </location>
</feature>
<dbReference type="EMBL" id="AE000511">
    <property type="protein sequence ID" value="AAD08358.1"/>
    <property type="molecule type" value="Genomic_DNA"/>
</dbReference>
<dbReference type="PIR" id="G64684">
    <property type="entry name" value="G64684"/>
</dbReference>
<dbReference type="RefSeq" id="NP_208111.1">
    <property type="nucleotide sequence ID" value="NC_000915.1"/>
</dbReference>
<dbReference type="RefSeq" id="WP_000395313.1">
    <property type="nucleotide sequence ID" value="NC_018939.1"/>
</dbReference>
<dbReference type="SMR" id="P56031"/>
<dbReference type="FunCoup" id="P56031">
    <property type="interactions" value="441"/>
</dbReference>
<dbReference type="STRING" id="85962.HP_1319"/>
<dbReference type="PaxDb" id="85962-C694_06810"/>
<dbReference type="EnsemblBacteria" id="AAD08358">
    <property type="protein sequence ID" value="AAD08358"/>
    <property type="gene ID" value="HP_1319"/>
</dbReference>
<dbReference type="KEGG" id="heo:C694_06810"/>
<dbReference type="KEGG" id="hpy:HP_1319"/>
<dbReference type="PATRIC" id="fig|85962.47.peg.1413"/>
<dbReference type="eggNOG" id="COG0087">
    <property type="taxonomic scope" value="Bacteria"/>
</dbReference>
<dbReference type="InParanoid" id="P56031"/>
<dbReference type="OrthoDB" id="9806135at2"/>
<dbReference type="PhylomeDB" id="P56031"/>
<dbReference type="Proteomes" id="UP000000429">
    <property type="component" value="Chromosome"/>
</dbReference>
<dbReference type="GO" id="GO:0022625">
    <property type="term" value="C:cytosolic large ribosomal subunit"/>
    <property type="evidence" value="ECO:0000318"/>
    <property type="project" value="GO_Central"/>
</dbReference>
<dbReference type="GO" id="GO:0019843">
    <property type="term" value="F:rRNA binding"/>
    <property type="evidence" value="ECO:0007669"/>
    <property type="project" value="UniProtKB-KW"/>
</dbReference>
<dbReference type="GO" id="GO:0003735">
    <property type="term" value="F:structural constituent of ribosome"/>
    <property type="evidence" value="ECO:0000318"/>
    <property type="project" value="GO_Central"/>
</dbReference>
<dbReference type="GO" id="GO:0006412">
    <property type="term" value="P:translation"/>
    <property type="evidence" value="ECO:0007669"/>
    <property type="project" value="InterPro"/>
</dbReference>
<dbReference type="FunFam" id="2.40.30.10:FF:000004">
    <property type="entry name" value="50S ribosomal protein L3"/>
    <property type="match status" value="1"/>
</dbReference>
<dbReference type="Gene3D" id="2.40.30.10">
    <property type="entry name" value="Translation factors"/>
    <property type="match status" value="1"/>
</dbReference>
<dbReference type="InterPro" id="IPR000597">
    <property type="entry name" value="Ribosomal_uL3"/>
</dbReference>
<dbReference type="InterPro" id="IPR019927">
    <property type="entry name" value="Ribosomal_uL3_bac/org-type"/>
</dbReference>
<dbReference type="InterPro" id="IPR009000">
    <property type="entry name" value="Transl_B-barrel_sf"/>
</dbReference>
<dbReference type="NCBIfam" id="TIGR03625">
    <property type="entry name" value="L3_bact"/>
    <property type="match status" value="1"/>
</dbReference>
<dbReference type="PANTHER" id="PTHR11229">
    <property type="entry name" value="50S RIBOSOMAL PROTEIN L3"/>
    <property type="match status" value="1"/>
</dbReference>
<dbReference type="PANTHER" id="PTHR11229:SF16">
    <property type="entry name" value="LARGE RIBOSOMAL SUBUNIT PROTEIN UL3C"/>
    <property type="match status" value="1"/>
</dbReference>
<dbReference type="Pfam" id="PF00297">
    <property type="entry name" value="Ribosomal_L3"/>
    <property type="match status" value="1"/>
</dbReference>
<dbReference type="SUPFAM" id="SSF50447">
    <property type="entry name" value="Translation proteins"/>
    <property type="match status" value="1"/>
</dbReference>
<reference key="1">
    <citation type="journal article" date="1997" name="Nature">
        <title>The complete genome sequence of the gastric pathogen Helicobacter pylori.</title>
        <authorList>
            <person name="Tomb J.-F."/>
            <person name="White O."/>
            <person name="Kerlavage A.R."/>
            <person name="Clayton R.A."/>
            <person name="Sutton G.G."/>
            <person name="Fleischmann R.D."/>
            <person name="Ketchum K.A."/>
            <person name="Klenk H.-P."/>
            <person name="Gill S.R."/>
            <person name="Dougherty B.A."/>
            <person name="Nelson K.E."/>
            <person name="Quackenbush J."/>
            <person name="Zhou L."/>
            <person name="Kirkness E.F."/>
            <person name="Peterson S.N."/>
            <person name="Loftus B.J."/>
            <person name="Richardson D.L."/>
            <person name="Dodson R.J."/>
            <person name="Khalak H.G."/>
            <person name="Glodek A."/>
            <person name="McKenney K."/>
            <person name="FitzGerald L.M."/>
            <person name="Lee N."/>
            <person name="Adams M.D."/>
            <person name="Hickey E.K."/>
            <person name="Berg D.E."/>
            <person name="Gocayne J.D."/>
            <person name="Utterback T.R."/>
            <person name="Peterson J.D."/>
            <person name="Kelley J.M."/>
            <person name="Cotton M.D."/>
            <person name="Weidman J.F."/>
            <person name="Fujii C."/>
            <person name="Bowman C."/>
            <person name="Watthey L."/>
            <person name="Wallin E."/>
            <person name="Hayes W.S."/>
            <person name="Borodovsky M."/>
            <person name="Karp P.D."/>
            <person name="Smith H.O."/>
            <person name="Fraser C.M."/>
            <person name="Venter J.C."/>
        </authorList>
    </citation>
    <scope>NUCLEOTIDE SEQUENCE [LARGE SCALE GENOMIC DNA]</scope>
    <source>
        <strain>ATCC 700392 / 26695</strain>
    </source>
</reference>
<accession>P56031</accession>
<comment type="function">
    <text evidence="1">One of the primary rRNA binding proteins, it binds directly near the 3'-end of the 23S rRNA, where it nucleates assembly of the 50S subunit.</text>
</comment>
<comment type="subunit">
    <text evidence="1">Part of the 50S ribosomal subunit. Forms a cluster with proteins L14 and L19 (By similarity).</text>
</comment>
<comment type="similarity">
    <text evidence="3">Belongs to the universal ribosomal protein uL3 family.</text>
</comment>
<evidence type="ECO:0000250" key="1"/>
<evidence type="ECO:0000256" key="2">
    <source>
        <dbReference type="SAM" id="MobiDB-lite"/>
    </source>
</evidence>
<evidence type="ECO:0000305" key="3"/>
<proteinExistence type="inferred from homology"/>
<protein>
    <recommendedName>
        <fullName evidence="3">Large ribosomal subunit protein uL3</fullName>
    </recommendedName>
    <alternativeName>
        <fullName>50S ribosomal protein L3</fullName>
    </alternativeName>
</protein>
<gene>
    <name type="primary">rplC</name>
    <name type="ordered locus">HP_1319</name>
</gene>
<organism>
    <name type="scientific">Helicobacter pylori (strain ATCC 700392 / 26695)</name>
    <name type="common">Campylobacter pylori</name>
    <dbReference type="NCBI Taxonomy" id="85962"/>
    <lineage>
        <taxon>Bacteria</taxon>
        <taxon>Pseudomonadati</taxon>
        <taxon>Campylobacterota</taxon>
        <taxon>Epsilonproteobacteria</taxon>
        <taxon>Campylobacterales</taxon>
        <taxon>Helicobacteraceae</taxon>
        <taxon>Helicobacter</taxon>
    </lineage>
</organism>
<sequence>MEFLVQKIGMSRTIDANSTPVTLLKVLQAKVCQLENGKALVAYAMHKKHNKAIEGQQKKYQLSKEFNHFATLKASQQKELGDLDLSALETLKRVKASFKTKGRGFAGVMKRWNFQGGPAAHGSRFHRRPGSIGNREWPGRVQKGRKMAGHYGNELVTCQNEVLSFDKESMVLVLKGSVAGFSGAYGRIRAV</sequence>
<keyword id="KW-1185">Reference proteome</keyword>
<keyword id="KW-0687">Ribonucleoprotein</keyword>
<keyword id="KW-0689">Ribosomal protein</keyword>
<keyword id="KW-0694">RNA-binding</keyword>
<keyword id="KW-0699">rRNA-binding</keyword>
<name>RL3_HELPY</name>